<keyword id="KW-0539">Nucleus</keyword>
<keyword id="KW-0597">Phosphoprotein</keyword>
<keyword id="KW-1185">Reference proteome</keyword>
<keyword id="KW-0804">Transcription</keyword>
<keyword id="KW-0805">Transcription regulation</keyword>
<feature type="chain" id="PRO_0000084164" description="Protein IFH1">
    <location>
        <begin position="1"/>
        <end position="1085"/>
    </location>
</feature>
<feature type="region of interest" description="Disordered" evidence="1">
    <location>
        <begin position="1"/>
        <end position="251"/>
    </location>
</feature>
<feature type="region of interest" description="Disordered" evidence="1">
    <location>
        <begin position="283"/>
        <end position="302"/>
    </location>
</feature>
<feature type="region of interest" description="Disordered" evidence="1">
    <location>
        <begin position="457"/>
        <end position="493"/>
    </location>
</feature>
<feature type="region of interest" description="Disordered" evidence="1">
    <location>
        <begin position="507"/>
        <end position="622"/>
    </location>
</feature>
<feature type="region of interest" description="Disordered" evidence="1">
    <location>
        <begin position="676"/>
        <end position="700"/>
    </location>
</feature>
<feature type="region of interest" description="Disordered" evidence="1">
    <location>
        <begin position="747"/>
        <end position="774"/>
    </location>
</feature>
<feature type="compositionally biased region" description="Polar residues" evidence="1">
    <location>
        <begin position="9"/>
        <end position="18"/>
    </location>
</feature>
<feature type="compositionally biased region" description="Polar residues" evidence="1">
    <location>
        <begin position="39"/>
        <end position="48"/>
    </location>
</feature>
<feature type="compositionally biased region" description="Low complexity" evidence="1">
    <location>
        <begin position="54"/>
        <end position="66"/>
    </location>
</feature>
<feature type="compositionally biased region" description="Basic residues" evidence="1">
    <location>
        <begin position="76"/>
        <end position="85"/>
    </location>
</feature>
<feature type="compositionally biased region" description="Acidic residues" evidence="1">
    <location>
        <begin position="120"/>
        <end position="165"/>
    </location>
</feature>
<feature type="compositionally biased region" description="Polar residues" evidence="1">
    <location>
        <begin position="184"/>
        <end position="197"/>
    </location>
</feature>
<feature type="compositionally biased region" description="Basic and acidic residues" evidence="1">
    <location>
        <begin position="209"/>
        <end position="239"/>
    </location>
</feature>
<feature type="compositionally biased region" description="Polar residues" evidence="1">
    <location>
        <begin position="241"/>
        <end position="251"/>
    </location>
</feature>
<feature type="compositionally biased region" description="Basic and acidic residues" evidence="1">
    <location>
        <begin position="283"/>
        <end position="297"/>
    </location>
</feature>
<feature type="compositionally biased region" description="Basic residues" evidence="1">
    <location>
        <begin position="474"/>
        <end position="483"/>
    </location>
</feature>
<feature type="compositionally biased region" description="Polar residues" evidence="1">
    <location>
        <begin position="484"/>
        <end position="493"/>
    </location>
</feature>
<feature type="compositionally biased region" description="Basic residues" evidence="1">
    <location>
        <begin position="513"/>
        <end position="524"/>
    </location>
</feature>
<feature type="compositionally biased region" description="Polar residues" evidence="1">
    <location>
        <begin position="546"/>
        <end position="557"/>
    </location>
</feature>
<feature type="compositionally biased region" description="Basic and acidic residues" evidence="1">
    <location>
        <begin position="584"/>
        <end position="599"/>
    </location>
</feature>
<feature type="compositionally biased region" description="Acidic residues" evidence="1">
    <location>
        <begin position="607"/>
        <end position="620"/>
    </location>
</feature>
<feature type="compositionally biased region" description="Acidic residues" evidence="1">
    <location>
        <begin position="676"/>
        <end position="686"/>
    </location>
</feature>
<feature type="compositionally biased region" description="Basic and acidic residues" evidence="1">
    <location>
        <begin position="747"/>
        <end position="764"/>
    </location>
</feature>
<feature type="modified residue" description="Phosphoserine" evidence="6">
    <location>
        <position position="208"/>
    </location>
</feature>
<feature type="modified residue" description="Phosphoserine" evidence="7">
    <location>
        <position position="1041"/>
    </location>
</feature>
<accession>P39520</accession>
<accession>D6VYM3</accession>
<gene>
    <name type="primary">IFH1</name>
    <name type="synonym">RRP3</name>
    <name type="ordered locus">YLR223C</name>
    <name type="ORF">L8083.9</name>
</gene>
<evidence type="ECO:0000256" key="1">
    <source>
        <dbReference type="SAM" id="MobiDB-lite"/>
    </source>
</evidence>
<evidence type="ECO:0000269" key="2">
    <source>
    </source>
</evidence>
<evidence type="ECO:0000269" key="3">
    <source>
    </source>
</evidence>
<evidence type="ECO:0000269" key="4">
    <source>
    </source>
</evidence>
<evidence type="ECO:0000305" key="5"/>
<evidence type="ECO:0007744" key="6">
    <source>
    </source>
</evidence>
<evidence type="ECO:0007744" key="7">
    <source>
    </source>
</evidence>
<protein>
    <recommendedName>
        <fullName>Protein IFH1</fullName>
    </recommendedName>
    <alternativeName>
        <fullName>Ribosomal RNA-processing protein 3</fullName>
    </alternativeName>
</protein>
<dbReference type="EMBL" id="Z29488">
    <property type="protein sequence ID" value="CAA82624.1"/>
    <property type="molecule type" value="Genomic_DNA"/>
</dbReference>
<dbReference type="EMBL" id="U19027">
    <property type="protein sequence ID" value="AAB67412.1"/>
    <property type="molecule type" value="Genomic_DNA"/>
</dbReference>
<dbReference type="EMBL" id="BK006945">
    <property type="protein sequence ID" value="DAA09539.1"/>
    <property type="molecule type" value="Genomic_DNA"/>
</dbReference>
<dbReference type="PIR" id="S55352">
    <property type="entry name" value="S55352"/>
</dbReference>
<dbReference type="RefSeq" id="NP_013324.1">
    <property type="nucleotide sequence ID" value="NM_001182110.1"/>
</dbReference>
<dbReference type="SMR" id="P39520"/>
<dbReference type="BioGRID" id="31490">
    <property type="interactions" value="66"/>
</dbReference>
<dbReference type="ComplexPortal" id="CPX-774">
    <property type="entry name" value="CURI complex variant 1"/>
</dbReference>
<dbReference type="ComplexPortal" id="CPX-775">
    <property type="entry name" value="CURI complex variant 2"/>
</dbReference>
<dbReference type="ComplexPortal" id="CPX-776">
    <property type="entry name" value="CURI complex variant 3"/>
</dbReference>
<dbReference type="DIP" id="DIP-905N"/>
<dbReference type="FunCoup" id="P39520">
    <property type="interactions" value="644"/>
</dbReference>
<dbReference type="IntAct" id="P39520">
    <property type="interactions" value="23"/>
</dbReference>
<dbReference type="MINT" id="P39520"/>
<dbReference type="STRING" id="4932.YLR223C"/>
<dbReference type="iPTMnet" id="P39520"/>
<dbReference type="PaxDb" id="4932-YLR223C"/>
<dbReference type="PeptideAtlas" id="P39520"/>
<dbReference type="EnsemblFungi" id="YLR223C_mRNA">
    <property type="protein sequence ID" value="YLR223C"/>
    <property type="gene ID" value="YLR223C"/>
</dbReference>
<dbReference type="GeneID" id="850920"/>
<dbReference type="KEGG" id="sce:YLR223C"/>
<dbReference type="AGR" id="SGD:S000004213"/>
<dbReference type="SGD" id="S000004213">
    <property type="gene designation" value="IFH1"/>
</dbReference>
<dbReference type="VEuPathDB" id="FungiDB:YLR223C"/>
<dbReference type="eggNOG" id="ENOG502QQB6">
    <property type="taxonomic scope" value="Eukaryota"/>
</dbReference>
<dbReference type="GeneTree" id="ENSGT00940000176808"/>
<dbReference type="HOGENOM" id="CLU_009986_0_0_1"/>
<dbReference type="InParanoid" id="P39520"/>
<dbReference type="OMA" id="KLGTWET"/>
<dbReference type="OrthoDB" id="4047468at2759"/>
<dbReference type="BioCyc" id="YEAST:G3O-32337-MONOMER"/>
<dbReference type="BioGRID-ORCS" id="850920">
    <property type="hits" value="5 hits in 10 CRISPR screens"/>
</dbReference>
<dbReference type="PRO" id="PR:P39520"/>
<dbReference type="Proteomes" id="UP000002311">
    <property type="component" value="Chromosome XII"/>
</dbReference>
<dbReference type="RNAct" id="P39520">
    <property type="molecule type" value="protein"/>
</dbReference>
<dbReference type="GO" id="GO:0000785">
    <property type="term" value="C:chromatin"/>
    <property type="evidence" value="ECO:0000314"/>
    <property type="project" value="SGD"/>
</dbReference>
<dbReference type="GO" id="GO:0000781">
    <property type="term" value="C:chromosome, telomeric region"/>
    <property type="evidence" value="ECO:0007669"/>
    <property type="project" value="GOC"/>
</dbReference>
<dbReference type="GO" id="GO:0032545">
    <property type="term" value="C:CURI complex"/>
    <property type="evidence" value="ECO:0000314"/>
    <property type="project" value="SGD"/>
</dbReference>
<dbReference type="GO" id="GO:0005730">
    <property type="term" value="C:nucleolus"/>
    <property type="evidence" value="ECO:0000314"/>
    <property type="project" value="SGD"/>
</dbReference>
<dbReference type="GO" id="GO:0005634">
    <property type="term" value="C:nucleus"/>
    <property type="evidence" value="ECO:0000314"/>
    <property type="project" value="SGD"/>
</dbReference>
<dbReference type="GO" id="GO:0003713">
    <property type="term" value="F:transcription coactivator activity"/>
    <property type="evidence" value="ECO:0000315"/>
    <property type="project" value="SGD"/>
</dbReference>
<dbReference type="GO" id="GO:0003712">
    <property type="term" value="F:transcription coregulator activity"/>
    <property type="evidence" value="ECO:0000318"/>
    <property type="project" value="GO_Central"/>
</dbReference>
<dbReference type="GO" id="GO:0042790">
    <property type="term" value="P:nucleolar large rRNA transcription by RNA polymerase I"/>
    <property type="evidence" value="ECO:0000314"/>
    <property type="project" value="ComplexPortal"/>
</dbReference>
<dbReference type="GO" id="GO:0060963">
    <property type="term" value="P:positive regulation of ribosomal protein gene transcription by RNA polymerase II"/>
    <property type="evidence" value="ECO:0000315"/>
    <property type="project" value="SGD"/>
</dbReference>
<dbReference type="GO" id="GO:0060962">
    <property type="term" value="P:regulation of ribosomal protein gene transcription by RNA polymerase II"/>
    <property type="evidence" value="ECO:0000314"/>
    <property type="project" value="ComplexPortal"/>
</dbReference>
<dbReference type="GO" id="GO:0006357">
    <property type="term" value="P:regulation of transcription by RNA polymerase II"/>
    <property type="evidence" value="ECO:0000318"/>
    <property type="project" value="GO_Central"/>
</dbReference>
<dbReference type="GO" id="GO:0031509">
    <property type="term" value="P:subtelomeric heterochromatin formation"/>
    <property type="evidence" value="ECO:0000315"/>
    <property type="project" value="SGD"/>
</dbReference>
<dbReference type="InterPro" id="IPR018837">
    <property type="entry name" value="TF_CRF1/IFH1"/>
</dbReference>
<dbReference type="PANTHER" id="PTHR28057">
    <property type="entry name" value="PROTEIN IFH1-RELATED"/>
    <property type="match status" value="1"/>
</dbReference>
<dbReference type="PANTHER" id="PTHR28057:SF1">
    <property type="entry name" value="PROTEIN IFH1-RELATED"/>
    <property type="match status" value="1"/>
</dbReference>
<dbReference type="Pfam" id="PF10380">
    <property type="entry name" value="CRF1"/>
    <property type="match status" value="1"/>
</dbReference>
<sequence length="1085" mass="122492">MAGKKSPRKSTINHSTHSGKLPANIKRLIKKGESDTKSRQSPPTLSTTRPRRFSLIYSSESSLSDVSDSDKNKSTNPHKIKRKAKNISNNSQGKKSKLIQRQIDNDDEGTESSDYQAVTDGEESENEEEESEEEEEDDDEDDDDDDDDGSDSDSDSETSSDDENIDFVKLTAQRKKRAMKALSAMNTNSNTLYSSRENSNKNKSVKLSPKKENEEEQKEEKEKEKEEQQKQQESNKKEVNGSGTTTTQQALSFKFKKEDDGISFGNGNEGYNEDIGEEVLDLKNKENNGNEEDKLDSKVMLGNNDELRFPNISESDESEYDIDQDAYFDVINNEDSHGEIGTDLETGEDDLPILEEEEQNIVSELQNDDELSFDGSIHEEGSDPVEDAENKFLQNEYNQENGYDEEDDEEDEIMSDFDMPFYEDPKFANLYYYGDGSEPKLSLSTSLPLMLNDEKLSKLKKKEAKKREQEERKQRRKLYKKTQKPSTRTTSNVDNDEYIFNVFFQSDDENSGHKSKKGRHKSGKSHIEHKNKGSNLIKSNDDLEPSTHSTVLNSGKYDSSDDEYDNILLDVAHMPSDDECSESETSHDADTDEELRALDSDSLDIGTELDDDYEDDDDDSSVTNVFIDIDDLDPDSFYFHYDSDGSSSLISSNSDKENSDGSKDCKHDLLETVVYVDDESTDEDDNLPPPSSRSKNIGSKAKEIVSSNVVGLRPPKLGTWETDNKPFSIIDGLSTKSLYALIQEHQQLREQHQRAQTPDVKREGSSNGNNGDELTLNELLNMSELEDDSPSHTDDMENNYNDAINSKSTNGHAADWYEVPKVPLSAFRNKGINAYEEDEYMIPANSNRKVPIGYIGNERTRKKIDKMKELQRKKTEKKRQLKKKKKLLKIRKQRQKAIKEQETMNLQLGINGHEIIGNNNSHSDINTGTDFTTNENTPMNELPSHAPEDASLIPHNSDLAVDSNTRKNSTKSVGLDEIHEILGKDENDLLSVGDINGYDAQEGHVIEDTDADILASLTAPVQFDNTLSHENSNSMWRRRQSMVEAAAENLRFTKNGLFSESALADIEGIMGNDVNHSFEFNDVLQ</sequence>
<reference key="1">
    <citation type="journal article" date="1995" name="Yeast">
        <title>The IFH1 gene product interacts with a fork head protein in Saccharomyces cerevisiae.</title>
        <authorList>
            <person name="Cherel I."/>
            <person name="Thuriaux P."/>
        </authorList>
    </citation>
    <scope>NUCLEOTIDE SEQUENCE [GENOMIC DNA]</scope>
    <scope>FUNCTION</scope>
    <source>
        <strain>ATCC 28383 / FL100 / VTT C-80102</strain>
    </source>
</reference>
<reference key="2">
    <citation type="journal article" date="1997" name="Nature">
        <title>The nucleotide sequence of Saccharomyces cerevisiae chromosome XII.</title>
        <authorList>
            <person name="Johnston M."/>
            <person name="Hillier L.W."/>
            <person name="Riles L."/>
            <person name="Albermann K."/>
            <person name="Andre B."/>
            <person name="Ansorge W."/>
            <person name="Benes V."/>
            <person name="Brueckner M."/>
            <person name="Delius H."/>
            <person name="Dubois E."/>
            <person name="Duesterhoeft A."/>
            <person name="Entian K.-D."/>
            <person name="Floeth M."/>
            <person name="Goffeau A."/>
            <person name="Hebling U."/>
            <person name="Heumann K."/>
            <person name="Heuss-Neitzel D."/>
            <person name="Hilbert H."/>
            <person name="Hilger F."/>
            <person name="Kleine K."/>
            <person name="Koetter P."/>
            <person name="Louis E.J."/>
            <person name="Messenguy F."/>
            <person name="Mewes H.-W."/>
            <person name="Miosga T."/>
            <person name="Moestl D."/>
            <person name="Mueller-Auer S."/>
            <person name="Nentwich U."/>
            <person name="Obermaier B."/>
            <person name="Piravandi E."/>
            <person name="Pohl T.M."/>
            <person name="Portetelle D."/>
            <person name="Purnelle B."/>
            <person name="Rechmann S."/>
            <person name="Rieger M."/>
            <person name="Rinke M."/>
            <person name="Rose M."/>
            <person name="Scharfe M."/>
            <person name="Scherens B."/>
            <person name="Scholler P."/>
            <person name="Schwager C."/>
            <person name="Schwarz S."/>
            <person name="Underwood A.P."/>
            <person name="Urrestarazu L.A."/>
            <person name="Vandenbol M."/>
            <person name="Verhasselt P."/>
            <person name="Vierendeels F."/>
            <person name="Voet M."/>
            <person name="Volckaert G."/>
            <person name="Voss H."/>
            <person name="Wambutt R."/>
            <person name="Wedler E."/>
            <person name="Wedler H."/>
            <person name="Zimmermann F.K."/>
            <person name="Zollner A."/>
            <person name="Hani J."/>
            <person name="Hoheisel J.D."/>
        </authorList>
    </citation>
    <scope>NUCLEOTIDE SEQUENCE [LARGE SCALE GENOMIC DNA]</scope>
    <source>
        <strain>ATCC 204508 / S288c</strain>
    </source>
</reference>
<reference key="3">
    <citation type="journal article" date="2014" name="G3 (Bethesda)">
        <title>The reference genome sequence of Saccharomyces cerevisiae: Then and now.</title>
        <authorList>
            <person name="Engel S.R."/>
            <person name="Dietrich F.S."/>
            <person name="Fisk D.G."/>
            <person name="Binkley G."/>
            <person name="Balakrishnan R."/>
            <person name="Costanzo M.C."/>
            <person name="Dwight S.S."/>
            <person name="Hitz B.C."/>
            <person name="Karra K."/>
            <person name="Nash R.S."/>
            <person name="Weng S."/>
            <person name="Wong E.D."/>
            <person name="Lloyd P."/>
            <person name="Skrzypek M.S."/>
            <person name="Miyasato S.R."/>
            <person name="Simison M."/>
            <person name="Cherry J.M."/>
        </authorList>
    </citation>
    <scope>GENOME REANNOTATION</scope>
    <source>
        <strain>ATCC 204508 / S288c</strain>
    </source>
</reference>
<reference key="4">
    <citation type="journal article" date="2003" name="Nature">
        <title>Global analysis of protein expression in yeast.</title>
        <authorList>
            <person name="Ghaemmaghami S."/>
            <person name="Huh W.-K."/>
            <person name="Bower K."/>
            <person name="Howson R.W."/>
            <person name="Belle A."/>
            <person name="Dephoure N."/>
            <person name="O'Shea E.K."/>
            <person name="Weissman J.S."/>
        </authorList>
    </citation>
    <scope>LEVEL OF PROTEIN EXPRESSION [LARGE SCALE ANALYSIS]</scope>
</reference>
<reference key="5">
    <citation type="journal article" date="2004" name="Nature">
        <title>The transcription factor Ifh1 is a key regulator of yeast ribosomal protein genes.</title>
        <authorList>
            <person name="Wade J.T."/>
            <person name="Hall D.B."/>
            <person name="Struhl K."/>
        </authorList>
    </citation>
    <scope>FUNCTION</scope>
</reference>
<reference key="6">
    <citation type="journal article" date="2007" name="Proc. Natl. Acad. Sci. U.S.A.">
        <title>Analysis of phosphorylation sites on proteins from Saccharomyces cerevisiae by electron transfer dissociation (ETD) mass spectrometry.</title>
        <authorList>
            <person name="Chi A."/>
            <person name="Huttenhower C."/>
            <person name="Geer L.Y."/>
            <person name="Coon J.J."/>
            <person name="Syka J.E.P."/>
            <person name="Bai D.L."/>
            <person name="Shabanowitz J."/>
            <person name="Burke D.J."/>
            <person name="Troyanskaya O.G."/>
            <person name="Hunt D.F."/>
        </authorList>
    </citation>
    <scope>PHOSPHORYLATION [LARGE SCALE ANALYSIS] AT SER-208</scope>
    <scope>IDENTIFICATION BY MASS SPECTROMETRY [LARGE SCALE ANALYSIS]</scope>
</reference>
<reference key="7">
    <citation type="journal article" date="2009" name="Science">
        <title>Global analysis of Cdk1 substrate phosphorylation sites provides insights into evolution.</title>
        <authorList>
            <person name="Holt L.J."/>
            <person name="Tuch B.B."/>
            <person name="Villen J."/>
            <person name="Johnson A.D."/>
            <person name="Gygi S.P."/>
            <person name="Morgan D.O."/>
        </authorList>
    </citation>
    <scope>PHOSPHORYLATION [LARGE SCALE ANALYSIS] AT SER-1041</scope>
    <scope>IDENTIFICATION BY MASS SPECTROMETRY [LARGE SCALE ANALYSIS]</scope>
</reference>
<comment type="function">
    <text evidence="3 4">Transcriptional coactivator that together with FHL1 regulates the expression of rRNA and ribosomal protein genes (PubMed:15616568, PubMed:7785326). Its activity is negatively regulated by environmental stress (PubMed:15616568).</text>
</comment>
<comment type="interaction">
    <interactant intactId="EBI-9054">
        <id>P39520</id>
    </interactant>
    <interactant intactId="EBI-1878">
        <id>P53254</id>
        <label>UTP22</label>
    </interactant>
    <organismsDiffer>false</organismsDiffer>
    <experiments>7</experiments>
</comment>
<comment type="subcellular location">
    <subcellularLocation>
        <location evidence="5">Nucleus</location>
    </subcellularLocation>
</comment>
<comment type="miscellaneous">
    <text evidence="2">Present with 1430 molecules/cell in log phase SD medium.</text>
</comment>
<comment type="similarity">
    <text evidence="5">Belongs to the IFH1 family.</text>
</comment>
<name>IFH1_YEAST</name>
<organism>
    <name type="scientific">Saccharomyces cerevisiae (strain ATCC 204508 / S288c)</name>
    <name type="common">Baker's yeast</name>
    <dbReference type="NCBI Taxonomy" id="559292"/>
    <lineage>
        <taxon>Eukaryota</taxon>
        <taxon>Fungi</taxon>
        <taxon>Dikarya</taxon>
        <taxon>Ascomycota</taxon>
        <taxon>Saccharomycotina</taxon>
        <taxon>Saccharomycetes</taxon>
        <taxon>Saccharomycetales</taxon>
        <taxon>Saccharomycetaceae</taxon>
        <taxon>Saccharomyces</taxon>
    </lineage>
</organism>
<proteinExistence type="evidence at protein level"/>